<dbReference type="EC" id="2.3.1.117" evidence="1"/>
<dbReference type="EMBL" id="AM747720">
    <property type="protein sequence ID" value="CAR52401.1"/>
    <property type="molecule type" value="Genomic_DNA"/>
</dbReference>
<dbReference type="RefSeq" id="WP_006478479.1">
    <property type="nucleotide sequence ID" value="NC_011000.1"/>
</dbReference>
<dbReference type="SMR" id="B4ECP1"/>
<dbReference type="GeneID" id="93191604"/>
<dbReference type="KEGG" id="bcj:BCAL2101"/>
<dbReference type="eggNOG" id="COG2171">
    <property type="taxonomic scope" value="Bacteria"/>
</dbReference>
<dbReference type="HOGENOM" id="CLU_050859_0_1_4"/>
<dbReference type="BioCyc" id="BCEN216591:G1G1V-2301-MONOMER"/>
<dbReference type="UniPathway" id="UPA00034">
    <property type="reaction ID" value="UER00019"/>
</dbReference>
<dbReference type="Proteomes" id="UP000001035">
    <property type="component" value="Chromosome 1"/>
</dbReference>
<dbReference type="GO" id="GO:0005737">
    <property type="term" value="C:cytoplasm"/>
    <property type="evidence" value="ECO:0007669"/>
    <property type="project" value="UniProtKB-SubCell"/>
</dbReference>
<dbReference type="GO" id="GO:0008666">
    <property type="term" value="F:2,3,4,5-tetrahydropyridine-2,6-dicarboxylate N-succinyltransferase activity"/>
    <property type="evidence" value="ECO:0007669"/>
    <property type="project" value="UniProtKB-UniRule"/>
</dbReference>
<dbReference type="GO" id="GO:0016779">
    <property type="term" value="F:nucleotidyltransferase activity"/>
    <property type="evidence" value="ECO:0007669"/>
    <property type="project" value="TreeGrafter"/>
</dbReference>
<dbReference type="GO" id="GO:0019877">
    <property type="term" value="P:diaminopimelate biosynthetic process"/>
    <property type="evidence" value="ECO:0007669"/>
    <property type="project" value="UniProtKB-UniRule"/>
</dbReference>
<dbReference type="GO" id="GO:0009089">
    <property type="term" value="P:lysine biosynthetic process via diaminopimelate"/>
    <property type="evidence" value="ECO:0007669"/>
    <property type="project" value="UniProtKB-UniRule"/>
</dbReference>
<dbReference type="CDD" id="cd03350">
    <property type="entry name" value="LbH_THP_succinylT"/>
    <property type="match status" value="1"/>
</dbReference>
<dbReference type="Gene3D" id="2.160.10.10">
    <property type="entry name" value="Hexapeptide repeat proteins"/>
    <property type="match status" value="1"/>
</dbReference>
<dbReference type="Gene3D" id="1.10.166.10">
    <property type="entry name" value="Tetrahydrodipicolinate-N-succinyltransferase, N-terminal domain"/>
    <property type="match status" value="1"/>
</dbReference>
<dbReference type="HAMAP" id="MF_00811">
    <property type="entry name" value="DapD"/>
    <property type="match status" value="1"/>
</dbReference>
<dbReference type="InterPro" id="IPR005664">
    <property type="entry name" value="DapD_Trfase_Hexpep_rpt_fam"/>
</dbReference>
<dbReference type="InterPro" id="IPR001451">
    <property type="entry name" value="Hexapep"/>
</dbReference>
<dbReference type="InterPro" id="IPR018357">
    <property type="entry name" value="Hexapep_transf_CS"/>
</dbReference>
<dbReference type="InterPro" id="IPR023180">
    <property type="entry name" value="THP_succinylTrfase_dom1"/>
</dbReference>
<dbReference type="InterPro" id="IPR037133">
    <property type="entry name" value="THP_succinylTrfase_N_sf"/>
</dbReference>
<dbReference type="InterPro" id="IPR011004">
    <property type="entry name" value="Trimer_LpxA-like_sf"/>
</dbReference>
<dbReference type="NCBIfam" id="TIGR00965">
    <property type="entry name" value="dapD"/>
    <property type="match status" value="1"/>
</dbReference>
<dbReference type="NCBIfam" id="NF008808">
    <property type="entry name" value="PRK11830.1"/>
    <property type="match status" value="1"/>
</dbReference>
<dbReference type="PANTHER" id="PTHR19136:SF52">
    <property type="entry name" value="2,3,4,5-TETRAHYDROPYRIDINE-2,6-DICARBOXYLATE N-SUCCINYLTRANSFERASE"/>
    <property type="match status" value="1"/>
</dbReference>
<dbReference type="PANTHER" id="PTHR19136">
    <property type="entry name" value="MOLYBDENUM COFACTOR GUANYLYLTRANSFERASE"/>
    <property type="match status" value="1"/>
</dbReference>
<dbReference type="Pfam" id="PF14602">
    <property type="entry name" value="Hexapep_2"/>
    <property type="match status" value="1"/>
</dbReference>
<dbReference type="Pfam" id="PF14805">
    <property type="entry name" value="THDPS_N_2"/>
    <property type="match status" value="1"/>
</dbReference>
<dbReference type="SUPFAM" id="SSF51161">
    <property type="entry name" value="Trimeric LpxA-like enzymes"/>
    <property type="match status" value="1"/>
</dbReference>
<dbReference type="PROSITE" id="PS00101">
    <property type="entry name" value="HEXAPEP_TRANSFERASES"/>
    <property type="match status" value="1"/>
</dbReference>
<evidence type="ECO:0000255" key="1">
    <source>
        <dbReference type="HAMAP-Rule" id="MF_00811"/>
    </source>
</evidence>
<proteinExistence type="inferred from homology"/>
<feature type="chain" id="PRO_1000134033" description="2,3,4,5-tetrahydropyridine-2,6-dicarboxylate N-succinyltransferase">
    <location>
        <begin position="1"/>
        <end position="275"/>
    </location>
</feature>
<sequence length="275" mass="29480">MSQQLQQIIDTAWENRAELSPKAAPADVREAVAHAIEQLDKGALRVAEKIDGNWTVHQWLKKAVLLSFRLEDNAPMPAGGYSQFYDKVPSKFANYTAEDFAAGGFRVVPPAIARRGSFIAKNVVLMPSYTNIGAYVDEGTMVDTWATVGSCAQIGKNVHLSGGVGIGGVLEPLQANPVIIEDNCFIGARSEVVEGVIVEENSVISMGVYLGQSTKIYDRETGEVSYGRIPAGSVVVAGNLPSKDGSHSLYCAVIVKKVDAKTRAKVGLNELLRGD</sequence>
<accession>B4ECP1</accession>
<organism>
    <name type="scientific">Burkholderia cenocepacia (strain ATCC BAA-245 / DSM 16553 / LMG 16656 / NCTC 13227 / J2315 / CF5610)</name>
    <name type="common">Burkholderia cepacia (strain J2315)</name>
    <dbReference type="NCBI Taxonomy" id="216591"/>
    <lineage>
        <taxon>Bacteria</taxon>
        <taxon>Pseudomonadati</taxon>
        <taxon>Pseudomonadota</taxon>
        <taxon>Betaproteobacteria</taxon>
        <taxon>Burkholderiales</taxon>
        <taxon>Burkholderiaceae</taxon>
        <taxon>Burkholderia</taxon>
        <taxon>Burkholderia cepacia complex</taxon>
    </lineage>
</organism>
<protein>
    <recommendedName>
        <fullName evidence="1">2,3,4,5-tetrahydropyridine-2,6-dicarboxylate N-succinyltransferase</fullName>
        <ecNumber evidence="1">2.3.1.117</ecNumber>
    </recommendedName>
    <alternativeName>
        <fullName evidence="1">Tetrahydrodipicolinate N-succinyltransferase</fullName>
        <shortName evidence="1">THP succinyltransferase</shortName>
        <shortName evidence="1">Tetrahydropicolinate succinylase</shortName>
    </alternativeName>
</protein>
<gene>
    <name evidence="1" type="primary">dapD</name>
    <name type="ordered locus">BceJ2315_20630</name>
    <name type="ORF">BCAL2101</name>
</gene>
<reference key="1">
    <citation type="journal article" date="2009" name="J. Bacteriol.">
        <title>The genome of Burkholderia cenocepacia J2315, an epidemic pathogen of cystic fibrosis patients.</title>
        <authorList>
            <person name="Holden M.T."/>
            <person name="Seth-Smith H.M."/>
            <person name="Crossman L.C."/>
            <person name="Sebaihia M."/>
            <person name="Bentley S.D."/>
            <person name="Cerdeno-Tarraga A.M."/>
            <person name="Thomson N.R."/>
            <person name="Bason N."/>
            <person name="Quail M.A."/>
            <person name="Sharp S."/>
            <person name="Cherevach I."/>
            <person name="Churcher C."/>
            <person name="Goodhead I."/>
            <person name="Hauser H."/>
            <person name="Holroyd N."/>
            <person name="Mungall K."/>
            <person name="Scott P."/>
            <person name="Walker D."/>
            <person name="White B."/>
            <person name="Rose H."/>
            <person name="Iversen P."/>
            <person name="Mil-Homens D."/>
            <person name="Rocha E.P."/>
            <person name="Fialho A.M."/>
            <person name="Baldwin A."/>
            <person name="Dowson C."/>
            <person name="Barrell B.G."/>
            <person name="Govan J.R."/>
            <person name="Vandamme P."/>
            <person name="Hart C.A."/>
            <person name="Mahenthiralingam E."/>
            <person name="Parkhill J."/>
        </authorList>
    </citation>
    <scope>NUCLEOTIDE SEQUENCE [LARGE SCALE GENOMIC DNA]</scope>
    <source>
        <strain>ATCC BAA-245 / DSM 16553 / LMG 16656 / NCTC 13227 / J2315 / CF5610</strain>
    </source>
</reference>
<keyword id="KW-0012">Acyltransferase</keyword>
<keyword id="KW-0028">Amino-acid biosynthesis</keyword>
<keyword id="KW-0963">Cytoplasm</keyword>
<keyword id="KW-0220">Diaminopimelate biosynthesis</keyword>
<keyword id="KW-0457">Lysine biosynthesis</keyword>
<keyword id="KW-0677">Repeat</keyword>
<keyword id="KW-0808">Transferase</keyword>
<name>DAPD_BURCJ</name>
<comment type="catalytic activity">
    <reaction evidence="1">
        <text>(S)-2,3,4,5-tetrahydrodipicolinate + succinyl-CoA + H2O = (S)-2-succinylamino-6-oxoheptanedioate + CoA</text>
        <dbReference type="Rhea" id="RHEA:17325"/>
        <dbReference type="ChEBI" id="CHEBI:15377"/>
        <dbReference type="ChEBI" id="CHEBI:15685"/>
        <dbReference type="ChEBI" id="CHEBI:16845"/>
        <dbReference type="ChEBI" id="CHEBI:57287"/>
        <dbReference type="ChEBI" id="CHEBI:57292"/>
        <dbReference type="EC" id="2.3.1.117"/>
    </reaction>
</comment>
<comment type="pathway">
    <text evidence="1">Amino-acid biosynthesis; L-lysine biosynthesis via DAP pathway; LL-2,6-diaminopimelate from (S)-tetrahydrodipicolinate (succinylase route): step 1/3.</text>
</comment>
<comment type="subcellular location">
    <subcellularLocation>
        <location evidence="1">Cytoplasm</location>
    </subcellularLocation>
</comment>
<comment type="similarity">
    <text evidence="1">Belongs to the transferase hexapeptide repeat family.</text>
</comment>